<organismHost>
    <name type="scientific">Homo sapiens</name>
    <name type="common">Human</name>
    <dbReference type="NCBI Taxonomy" id="9606"/>
</organismHost>
<keyword id="KW-0167">Capsid protein</keyword>
<keyword id="KW-1048">Host nucleus</keyword>
<keyword id="KW-0945">Host-virus interaction</keyword>
<keyword id="KW-1185">Reference proteome</keyword>
<keyword id="KW-0231">Viral genome packaging</keyword>
<keyword id="KW-1163">Viral penetration into host nucleus</keyword>
<keyword id="KW-1188">Viral release from host cell</keyword>
<keyword id="KW-0946">Virion</keyword>
<keyword id="KW-1160">Virus entry into host cell</keyword>
<gene>
    <name evidence="1" type="primary">CVC2</name>
    <name type="ordered locus">34</name>
</gene>
<feature type="chain" id="PRO_0000116001" description="Capsid vertex component 2">
    <location>
        <begin position="1"/>
        <end position="579"/>
    </location>
</feature>
<feature type="region of interest" description="Interaction with major capsid protein/MCP" evidence="1">
    <location>
        <begin position="1"/>
        <end position="50"/>
    </location>
</feature>
<protein>
    <recommendedName>
        <fullName evidence="1">Capsid vertex component 2</fullName>
    </recommendedName>
</protein>
<sequence length="579" mass="65185">MTARYGFGSISFPNKCGIFLSTTKNFIAPNFPIHYWTAPAFELRGRMNPDLEKNTLTLKNAAAVAALDNLRGETITLPTEIDRRLKPLEEQLTRMAKVLDSLETAAAEAEEADAQSEECTRTEIIRNESIHPEVQIAKNDAPLQYDTNFQVDFITLVYLGRARGNNSPGIVFGPWYRTLQERLVLDRPVAARGVDCKDGRISRTFMNTTVTCLQSAGRMYVGDRAYSAFECAVLCLYLMYRTSNSVHEPQVSSFGNLIEHLPEYTETFVNYMTTHENKNSYQFCYDRLPRDQFHARGGRYDQGALTSHSVMDALIRLQVLPPAPGQFNPGVNDIIDRNHTAYVDKIQQAAAAYLERAQNVFLMEDQTLLRLTIDTITALLLLRRLLWNGNVYGDKLKNNFQLGLIVSEATGTPTNNVILRGATGFDGKFKSGNNNFQFLCERYIAPLYTLNRTTELTEMFPGLVALCLDAHTQLSRGSLGRTVIDISSGQYQDRLISLIALELEHRRQNVTSLPIAAVVSIHDSVMLQYERGLGMLMHQPRVRAALEESRRLAQFNVNSDYDLLYFVCLGVIPQFASTP</sequence>
<name>CVC2_VZVD</name>
<proteinExistence type="inferred from homology"/>
<dbReference type="EMBL" id="X04370">
    <property type="protein sequence ID" value="CAA27917.1"/>
    <property type="molecule type" value="Genomic_DNA"/>
</dbReference>
<dbReference type="PIR" id="H27214">
    <property type="entry name" value="WZBE34"/>
</dbReference>
<dbReference type="Proteomes" id="UP000002602">
    <property type="component" value="Genome"/>
</dbReference>
<dbReference type="GO" id="GO:0043657">
    <property type="term" value="C:host cell"/>
    <property type="evidence" value="ECO:0007669"/>
    <property type="project" value="GOC"/>
</dbReference>
<dbReference type="GO" id="GO:0042025">
    <property type="term" value="C:host cell nucleus"/>
    <property type="evidence" value="ECO:0007669"/>
    <property type="project" value="UniProtKB-SubCell"/>
</dbReference>
<dbReference type="GO" id="GO:0019028">
    <property type="term" value="C:viral capsid"/>
    <property type="evidence" value="ECO:0007669"/>
    <property type="project" value="UniProtKB-KW"/>
</dbReference>
<dbReference type="GO" id="GO:0046718">
    <property type="term" value="P:symbiont entry into host cell"/>
    <property type="evidence" value="ECO:0007669"/>
    <property type="project" value="UniProtKB-KW"/>
</dbReference>
<dbReference type="GO" id="GO:0019072">
    <property type="term" value="P:viral genome packaging"/>
    <property type="evidence" value="ECO:0007669"/>
    <property type="project" value="InterPro"/>
</dbReference>
<dbReference type="GO" id="GO:0075732">
    <property type="term" value="P:viral penetration into host nucleus"/>
    <property type="evidence" value="ECO:0007669"/>
    <property type="project" value="UniProtKB-KW"/>
</dbReference>
<dbReference type="HAMAP" id="MF_04025">
    <property type="entry name" value="HSV_CVC2"/>
    <property type="match status" value="1"/>
</dbReference>
<dbReference type="InterPro" id="IPR002493">
    <property type="entry name" value="Herpes_UL25"/>
</dbReference>
<dbReference type="Pfam" id="PF01499">
    <property type="entry name" value="Herpes_UL25"/>
    <property type="match status" value="1"/>
</dbReference>
<accession>P09287</accession>
<comment type="function">
    <text evidence="1">Capsid vertex-specific component that plays a role during viral DNA encapsidation, assuring correct genome cleavage and presumably stabilizing capsids that contain full-length viral genomes. Participates in the interaction between the capsid and the tegument through interaction with the large tegument protein/LTP.</text>
</comment>
<comment type="subunit">
    <text evidence="1">Heterodimerizes with CVC1. Interacts with major capsid protein/MCP and triplex capsid protein 1/TRX1 at the pentamer vertices. Interacts with the large tegument protein/LTP.</text>
</comment>
<comment type="subcellular location">
    <subcellularLocation>
        <location evidence="1">Virion</location>
    </subcellularLocation>
    <subcellularLocation>
        <location evidence="1">Host nucleus</location>
    </subcellularLocation>
</comment>
<comment type="similarity">
    <text evidence="1">Belongs to the herpesviridae CVC2 protein family.</text>
</comment>
<organism>
    <name type="scientific">Varicella-zoster virus (strain Dumas)</name>
    <name type="common">HHV-3</name>
    <name type="synonym">Human herpesvirus 3</name>
    <dbReference type="NCBI Taxonomy" id="10338"/>
    <lineage>
        <taxon>Viruses</taxon>
        <taxon>Duplodnaviria</taxon>
        <taxon>Heunggongvirae</taxon>
        <taxon>Peploviricota</taxon>
        <taxon>Herviviricetes</taxon>
        <taxon>Herpesvirales</taxon>
        <taxon>Orthoherpesviridae</taxon>
        <taxon>Alphaherpesvirinae</taxon>
        <taxon>Varicellovirus</taxon>
        <taxon>Varicellovirus humanalpha3</taxon>
        <taxon>Human herpesvirus 3</taxon>
    </lineage>
</organism>
<reference key="1">
    <citation type="journal article" date="1986" name="J. Gen. Virol.">
        <title>The complete DNA sequence of varicella-zoster virus.</title>
        <authorList>
            <person name="Davison A.J."/>
            <person name="Scott J.E."/>
        </authorList>
    </citation>
    <scope>NUCLEOTIDE SEQUENCE [LARGE SCALE GENOMIC DNA]</scope>
</reference>
<evidence type="ECO:0000255" key="1">
    <source>
        <dbReference type="HAMAP-Rule" id="MF_04025"/>
    </source>
</evidence>